<keyword id="KW-0929">Antimicrobial</keyword>
<keyword id="KW-1015">Disulfide bond</keyword>
<keyword id="KW-0295">Fungicide</keyword>
<keyword id="KW-0309">Germination</keyword>
<keyword id="KW-0611">Plant defense</keyword>
<keyword id="KW-0964">Secreted</keyword>
<keyword id="KW-0732">Signal</keyword>
<protein>
    <recommendedName>
        <fullName>Defensin-like protein</fullName>
    </recommendedName>
    <alternativeName>
        <fullName>10 kDa protein</fullName>
    </alternativeName>
    <alternativeName>
        <fullName>Clone PSAS10</fullName>
    </alternativeName>
</protein>
<evidence type="ECO:0000250" key="1"/>
<evidence type="ECO:0000255" key="2"/>
<evidence type="ECO:0000305" key="3"/>
<sequence length="75" mass="8523">MEKKSIAGLCFLFLVLFVAQEVVVQSEAKTCENLVDTYRGPCFTTGSCDDHCKNKEHLLSGRCRDDVRCWCTRNC</sequence>
<organism>
    <name type="scientific">Vigna unguiculata</name>
    <name type="common">Cowpea</name>
    <dbReference type="NCBI Taxonomy" id="3917"/>
    <lineage>
        <taxon>Eukaryota</taxon>
        <taxon>Viridiplantae</taxon>
        <taxon>Streptophyta</taxon>
        <taxon>Embryophyta</taxon>
        <taxon>Tracheophyta</taxon>
        <taxon>Spermatophyta</taxon>
        <taxon>Magnoliopsida</taxon>
        <taxon>eudicotyledons</taxon>
        <taxon>Gunneridae</taxon>
        <taxon>Pentapetalae</taxon>
        <taxon>rosids</taxon>
        <taxon>fabids</taxon>
        <taxon>Fabales</taxon>
        <taxon>Fabaceae</taxon>
        <taxon>Papilionoideae</taxon>
        <taxon>50 kb inversion clade</taxon>
        <taxon>NPAAA clade</taxon>
        <taxon>indigoferoid/millettioid clade</taxon>
        <taxon>Phaseoleae</taxon>
        <taxon>Vigna</taxon>
    </lineage>
</organism>
<comment type="function">
    <text>This protein is required for germination.</text>
</comment>
<comment type="subcellular location">
    <subcellularLocation>
        <location evidence="1">Secreted</location>
    </subcellularLocation>
</comment>
<comment type="similarity">
    <text evidence="3">Belongs to the DEFL family.</text>
</comment>
<reference key="1">
    <citation type="journal article" date="1990" name="Plant Mol. Biol.">
        <title>Stored mRNA in cotyledons of Vigna unguiculata seeds: nucleotide sequence of cloned cDNA for a stored mRNA and induction of its synthesis by precocious germination.</title>
        <authorList>
            <person name="Ishibashi N."/>
            <person name="Yamauchi D."/>
            <person name="Minamikawa T."/>
        </authorList>
    </citation>
    <scope>NUCLEOTIDE SEQUENCE [MRNA]</scope>
    <source>
        <tissue>Cotyledon</tissue>
    </source>
</reference>
<name>DEF_VIGUN</name>
<accession>P18646</accession>
<dbReference type="EMBL" id="X16877">
    <property type="protein sequence ID" value="CAA34760.1"/>
    <property type="molecule type" value="mRNA"/>
</dbReference>
<dbReference type="PIR" id="S11156">
    <property type="entry name" value="S11156"/>
</dbReference>
<dbReference type="SMR" id="P18646"/>
<dbReference type="GO" id="GO:0005576">
    <property type="term" value="C:extracellular region"/>
    <property type="evidence" value="ECO:0007669"/>
    <property type="project" value="UniProtKB-SubCell"/>
</dbReference>
<dbReference type="GO" id="GO:0050832">
    <property type="term" value="P:defense response to fungus"/>
    <property type="evidence" value="ECO:0007669"/>
    <property type="project" value="UniProtKB-KW"/>
</dbReference>
<dbReference type="GO" id="GO:0031640">
    <property type="term" value="P:killing of cells of another organism"/>
    <property type="evidence" value="ECO:0007669"/>
    <property type="project" value="UniProtKB-KW"/>
</dbReference>
<dbReference type="Gene3D" id="3.30.30.10">
    <property type="entry name" value="Knottin, scorpion toxin-like"/>
    <property type="match status" value="1"/>
</dbReference>
<dbReference type="InterPro" id="IPR008176">
    <property type="entry name" value="Defensin_plant"/>
</dbReference>
<dbReference type="InterPro" id="IPR003614">
    <property type="entry name" value="Scorpion_toxin-like"/>
</dbReference>
<dbReference type="InterPro" id="IPR036574">
    <property type="entry name" value="Scorpion_toxin-like_sf"/>
</dbReference>
<dbReference type="PANTHER" id="PTHR33147:SF56">
    <property type="entry name" value="DEFENSIN"/>
    <property type="match status" value="1"/>
</dbReference>
<dbReference type="PANTHER" id="PTHR33147">
    <property type="entry name" value="DEFENSIN-LIKE PROTEIN 1"/>
    <property type="match status" value="1"/>
</dbReference>
<dbReference type="Pfam" id="PF00304">
    <property type="entry name" value="Gamma-thionin"/>
    <property type="match status" value="1"/>
</dbReference>
<dbReference type="SMART" id="SM00505">
    <property type="entry name" value="Knot1"/>
    <property type="match status" value="1"/>
</dbReference>
<dbReference type="SUPFAM" id="SSF57095">
    <property type="entry name" value="Scorpion toxin-like"/>
    <property type="match status" value="1"/>
</dbReference>
<dbReference type="PROSITE" id="PS00940">
    <property type="entry name" value="GAMMA_THIONIN"/>
    <property type="match status" value="1"/>
</dbReference>
<proteinExistence type="inferred from homology"/>
<feature type="signal peptide" evidence="2">
    <location>
        <begin position="1"/>
        <end position="24"/>
    </location>
</feature>
<feature type="chain" id="PRO_0000007058" description="Defensin-like protein">
    <location>
        <begin position="25"/>
        <end position="75"/>
    </location>
</feature>
<feature type="disulfide bond" evidence="1">
    <location>
        <begin position="31"/>
        <end position="75"/>
    </location>
</feature>
<feature type="disulfide bond" evidence="1">
    <location>
        <begin position="42"/>
        <end position="63"/>
    </location>
</feature>
<feature type="disulfide bond" evidence="1">
    <location>
        <begin position="48"/>
        <end position="69"/>
    </location>
</feature>
<feature type="disulfide bond" evidence="1">
    <location>
        <begin position="52"/>
        <end position="71"/>
    </location>
</feature>